<evidence type="ECO:0000255" key="1">
    <source>
        <dbReference type="HAMAP-Rule" id="MF_00044"/>
    </source>
</evidence>
<comment type="function">
    <text evidence="1">Catalyzes the attachment of L-aspartate to tRNA(Asp) in a two-step reaction: L-aspartate is first activated by ATP to form Asp-AMP and then transferred to the acceptor end of tRNA(Asp).</text>
</comment>
<comment type="catalytic activity">
    <reaction evidence="1">
        <text>tRNA(Asp) + L-aspartate + ATP = L-aspartyl-tRNA(Asp) + AMP + diphosphate</text>
        <dbReference type="Rhea" id="RHEA:19649"/>
        <dbReference type="Rhea" id="RHEA-COMP:9660"/>
        <dbReference type="Rhea" id="RHEA-COMP:9678"/>
        <dbReference type="ChEBI" id="CHEBI:29991"/>
        <dbReference type="ChEBI" id="CHEBI:30616"/>
        <dbReference type="ChEBI" id="CHEBI:33019"/>
        <dbReference type="ChEBI" id="CHEBI:78442"/>
        <dbReference type="ChEBI" id="CHEBI:78516"/>
        <dbReference type="ChEBI" id="CHEBI:456215"/>
        <dbReference type="EC" id="6.1.1.12"/>
    </reaction>
</comment>
<comment type="subunit">
    <text evidence="1">Homodimer.</text>
</comment>
<comment type="subcellular location">
    <subcellularLocation>
        <location evidence="1">Cytoplasm</location>
    </subcellularLocation>
</comment>
<comment type="similarity">
    <text evidence="1">Belongs to the class-II aminoacyl-tRNA synthetase family. Type 1 subfamily.</text>
</comment>
<name>SYD_STRCO</name>
<sequence>MHRYRSHTCGELRSSDVGTDVRLSGWLHNRRDLGGILFIDLRDHYGITQLVARPGTEAYEALDKLTKESTVRVDGKVVSRGADNINPDLPTGEVEVEVGEVELLGAAQPLPFTINTEDGVNEERRLEYRFLDLRRERMHRNIMLRTSVISSIRSKMVALGFNEMATPILTATSPEGARDFVVPSRLHAGRFYALPQAPQQFKQLLMISGFDRYFQIAPCFRDEDARADRSPGEFYQLDVEMSFVEQEDVFRPIEQLMTELFEEFGNGRHVTSPFPRIPFREAMLKYGSDKPDLRAQLELVDITDVFEGSEFKAFAGKHVRALPVPDVSGQPRRFFDQLGDYAVSQGAKGLAWVRVGEDGKLSGPIAKFLTEENVAELTKRLSLAPGHAVFFGAGEFDEVSKIMGAVRVEAAKRAGHFEENVFRFCWIVDFPMYEKDEETGKIDFSHNPFSMPQGGMDALENQDPLDILAWQYDIVCNGVELSSGAIRNHEPEIMLKAFEIAGYDAETVEREFAGMLRAFRFGAPPHGGIAPGVDRIVMLLADEPNIRETIAFPLNGNAQDLMMGAPTELDESRLRELHLTVRKPQPK</sequence>
<reference key="1">
    <citation type="journal article" date="2002" name="Nature">
        <title>Complete genome sequence of the model actinomycete Streptomyces coelicolor A3(2).</title>
        <authorList>
            <person name="Bentley S.D."/>
            <person name="Chater K.F."/>
            <person name="Cerdeno-Tarraga A.-M."/>
            <person name="Challis G.L."/>
            <person name="Thomson N.R."/>
            <person name="James K.D."/>
            <person name="Harris D.E."/>
            <person name="Quail M.A."/>
            <person name="Kieser H."/>
            <person name="Harper D."/>
            <person name="Bateman A."/>
            <person name="Brown S."/>
            <person name="Chandra G."/>
            <person name="Chen C.W."/>
            <person name="Collins M."/>
            <person name="Cronin A."/>
            <person name="Fraser A."/>
            <person name="Goble A."/>
            <person name="Hidalgo J."/>
            <person name="Hornsby T."/>
            <person name="Howarth S."/>
            <person name="Huang C.-H."/>
            <person name="Kieser T."/>
            <person name="Larke L."/>
            <person name="Murphy L.D."/>
            <person name="Oliver K."/>
            <person name="O'Neil S."/>
            <person name="Rabbinowitsch E."/>
            <person name="Rajandream M.A."/>
            <person name="Rutherford K.M."/>
            <person name="Rutter S."/>
            <person name="Seeger K."/>
            <person name="Saunders D."/>
            <person name="Sharp S."/>
            <person name="Squares R."/>
            <person name="Squares S."/>
            <person name="Taylor K."/>
            <person name="Warren T."/>
            <person name="Wietzorrek A."/>
            <person name="Woodward J.R."/>
            <person name="Barrell B.G."/>
            <person name="Parkhill J."/>
            <person name="Hopwood D.A."/>
        </authorList>
    </citation>
    <scope>NUCLEOTIDE SEQUENCE [LARGE SCALE GENOMIC DNA]</scope>
    <source>
        <strain>ATCC BAA-471 / A3(2) / M145</strain>
    </source>
</reference>
<dbReference type="EC" id="6.1.1.12" evidence="1"/>
<dbReference type="EMBL" id="AL939117">
    <property type="protein sequence ID" value="CAC08476.1"/>
    <property type="molecule type" value="Genomic_DNA"/>
</dbReference>
<dbReference type="RefSeq" id="NP_627985.1">
    <property type="nucleotide sequence ID" value="NC_003888.3"/>
</dbReference>
<dbReference type="RefSeq" id="WP_011029239.1">
    <property type="nucleotide sequence ID" value="NZ_VNID01000003.1"/>
</dbReference>
<dbReference type="SMR" id="Q9F323"/>
<dbReference type="FunCoup" id="Q9F323">
    <property type="interactions" value="464"/>
</dbReference>
<dbReference type="STRING" id="100226.gene:17761419"/>
<dbReference type="PaxDb" id="100226-SCO3795"/>
<dbReference type="KEGG" id="sco:SCO3795"/>
<dbReference type="PATRIC" id="fig|100226.15.peg.3857"/>
<dbReference type="eggNOG" id="COG0173">
    <property type="taxonomic scope" value="Bacteria"/>
</dbReference>
<dbReference type="HOGENOM" id="CLU_014330_3_2_11"/>
<dbReference type="InParanoid" id="Q9F323"/>
<dbReference type="OrthoDB" id="9802326at2"/>
<dbReference type="PhylomeDB" id="Q9F323"/>
<dbReference type="Proteomes" id="UP000001973">
    <property type="component" value="Chromosome"/>
</dbReference>
<dbReference type="GO" id="GO:0005737">
    <property type="term" value="C:cytoplasm"/>
    <property type="evidence" value="ECO:0007669"/>
    <property type="project" value="UniProtKB-SubCell"/>
</dbReference>
<dbReference type="GO" id="GO:0004815">
    <property type="term" value="F:aspartate-tRNA ligase activity"/>
    <property type="evidence" value="ECO:0000318"/>
    <property type="project" value="GO_Central"/>
</dbReference>
<dbReference type="GO" id="GO:0005524">
    <property type="term" value="F:ATP binding"/>
    <property type="evidence" value="ECO:0007669"/>
    <property type="project" value="UniProtKB-UniRule"/>
</dbReference>
<dbReference type="GO" id="GO:0003676">
    <property type="term" value="F:nucleic acid binding"/>
    <property type="evidence" value="ECO:0007669"/>
    <property type="project" value="InterPro"/>
</dbReference>
<dbReference type="GO" id="GO:0006422">
    <property type="term" value="P:aspartyl-tRNA aminoacylation"/>
    <property type="evidence" value="ECO:0000318"/>
    <property type="project" value="GO_Central"/>
</dbReference>
<dbReference type="CDD" id="cd00777">
    <property type="entry name" value="AspRS_core"/>
    <property type="match status" value="1"/>
</dbReference>
<dbReference type="CDD" id="cd04317">
    <property type="entry name" value="EcAspRS_like_N"/>
    <property type="match status" value="1"/>
</dbReference>
<dbReference type="Gene3D" id="3.30.930.10">
    <property type="entry name" value="Bira Bifunctional Protein, Domain 2"/>
    <property type="match status" value="1"/>
</dbReference>
<dbReference type="Gene3D" id="3.30.1360.30">
    <property type="entry name" value="GAD-like domain"/>
    <property type="match status" value="1"/>
</dbReference>
<dbReference type="Gene3D" id="2.40.50.140">
    <property type="entry name" value="Nucleic acid-binding proteins"/>
    <property type="match status" value="1"/>
</dbReference>
<dbReference type="HAMAP" id="MF_00044">
    <property type="entry name" value="Asp_tRNA_synth_type1"/>
    <property type="match status" value="1"/>
</dbReference>
<dbReference type="InterPro" id="IPR004364">
    <property type="entry name" value="Aa-tRNA-synt_II"/>
</dbReference>
<dbReference type="InterPro" id="IPR006195">
    <property type="entry name" value="aa-tRNA-synth_II"/>
</dbReference>
<dbReference type="InterPro" id="IPR045864">
    <property type="entry name" value="aa-tRNA-synth_II/BPL/LPL"/>
</dbReference>
<dbReference type="InterPro" id="IPR004524">
    <property type="entry name" value="Asp-tRNA-ligase_1"/>
</dbReference>
<dbReference type="InterPro" id="IPR047089">
    <property type="entry name" value="Asp-tRNA-ligase_1_N"/>
</dbReference>
<dbReference type="InterPro" id="IPR002312">
    <property type="entry name" value="Asp/Asn-tRNA-synth_IIb"/>
</dbReference>
<dbReference type="InterPro" id="IPR047090">
    <property type="entry name" value="AspRS_core"/>
</dbReference>
<dbReference type="InterPro" id="IPR004115">
    <property type="entry name" value="GAD-like_sf"/>
</dbReference>
<dbReference type="InterPro" id="IPR029351">
    <property type="entry name" value="GAD_dom"/>
</dbReference>
<dbReference type="InterPro" id="IPR012340">
    <property type="entry name" value="NA-bd_OB-fold"/>
</dbReference>
<dbReference type="InterPro" id="IPR004365">
    <property type="entry name" value="NA-bd_OB_tRNA"/>
</dbReference>
<dbReference type="NCBIfam" id="TIGR00459">
    <property type="entry name" value="aspS_bact"/>
    <property type="match status" value="1"/>
</dbReference>
<dbReference type="NCBIfam" id="NF001750">
    <property type="entry name" value="PRK00476.1"/>
    <property type="match status" value="1"/>
</dbReference>
<dbReference type="PANTHER" id="PTHR22594:SF5">
    <property type="entry name" value="ASPARTATE--TRNA LIGASE, MITOCHONDRIAL"/>
    <property type="match status" value="1"/>
</dbReference>
<dbReference type="PANTHER" id="PTHR22594">
    <property type="entry name" value="ASPARTYL/LYSYL-TRNA SYNTHETASE"/>
    <property type="match status" value="1"/>
</dbReference>
<dbReference type="Pfam" id="PF02938">
    <property type="entry name" value="GAD"/>
    <property type="match status" value="1"/>
</dbReference>
<dbReference type="Pfam" id="PF00152">
    <property type="entry name" value="tRNA-synt_2"/>
    <property type="match status" value="1"/>
</dbReference>
<dbReference type="Pfam" id="PF01336">
    <property type="entry name" value="tRNA_anti-codon"/>
    <property type="match status" value="1"/>
</dbReference>
<dbReference type="PRINTS" id="PR01042">
    <property type="entry name" value="TRNASYNTHASP"/>
</dbReference>
<dbReference type="SUPFAM" id="SSF55681">
    <property type="entry name" value="Class II aaRS and biotin synthetases"/>
    <property type="match status" value="1"/>
</dbReference>
<dbReference type="SUPFAM" id="SSF55261">
    <property type="entry name" value="GAD domain-like"/>
    <property type="match status" value="1"/>
</dbReference>
<dbReference type="SUPFAM" id="SSF50249">
    <property type="entry name" value="Nucleic acid-binding proteins"/>
    <property type="match status" value="1"/>
</dbReference>
<dbReference type="PROSITE" id="PS50862">
    <property type="entry name" value="AA_TRNA_LIGASE_II"/>
    <property type="match status" value="1"/>
</dbReference>
<proteinExistence type="inferred from homology"/>
<protein>
    <recommendedName>
        <fullName evidence="1">Aspartate--tRNA ligase</fullName>
        <ecNumber evidence="1">6.1.1.12</ecNumber>
    </recommendedName>
    <alternativeName>
        <fullName evidence="1">Aspartyl-tRNA synthetase</fullName>
        <shortName evidence="1">AspRS</shortName>
    </alternativeName>
</protein>
<accession>Q9F323</accession>
<feature type="chain" id="PRO_0000110952" description="Aspartate--tRNA ligase">
    <location>
        <begin position="1"/>
        <end position="587"/>
    </location>
</feature>
<feature type="region of interest" description="Aspartate" evidence="1">
    <location>
        <begin position="199"/>
        <end position="202"/>
    </location>
</feature>
<feature type="binding site" evidence="1">
    <location>
        <position position="175"/>
    </location>
    <ligand>
        <name>L-aspartate</name>
        <dbReference type="ChEBI" id="CHEBI:29991"/>
    </ligand>
</feature>
<feature type="binding site" evidence="1">
    <location>
        <begin position="221"/>
        <end position="223"/>
    </location>
    <ligand>
        <name>ATP</name>
        <dbReference type="ChEBI" id="CHEBI:30616"/>
    </ligand>
</feature>
<feature type="binding site" evidence="1">
    <location>
        <position position="221"/>
    </location>
    <ligand>
        <name>L-aspartate</name>
        <dbReference type="ChEBI" id="CHEBI:29991"/>
    </ligand>
</feature>
<feature type="binding site" evidence="1">
    <location>
        <position position="446"/>
    </location>
    <ligand>
        <name>L-aspartate</name>
        <dbReference type="ChEBI" id="CHEBI:29991"/>
    </ligand>
</feature>
<feature type="binding site" evidence="1">
    <location>
        <position position="480"/>
    </location>
    <ligand>
        <name>ATP</name>
        <dbReference type="ChEBI" id="CHEBI:30616"/>
    </ligand>
</feature>
<feature type="binding site" evidence="1">
    <location>
        <position position="487"/>
    </location>
    <ligand>
        <name>L-aspartate</name>
        <dbReference type="ChEBI" id="CHEBI:29991"/>
    </ligand>
</feature>
<feature type="binding site" evidence="1">
    <location>
        <begin position="532"/>
        <end position="535"/>
    </location>
    <ligand>
        <name>ATP</name>
        <dbReference type="ChEBI" id="CHEBI:30616"/>
    </ligand>
</feature>
<keyword id="KW-0030">Aminoacyl-tRNA synthetase</keyword>
<keyword id="KW-0067">ATP-binding</keyword>
<keyword id="KW-0963">Cytoplasm</keyword>
<keyword id="KW-0436">Ligase</keyword>
<keyword id="KW-0547">Nucleotide-binding</keyword>
<keyword id="KW-0648">Protein biosynthesis</keyword>
<keyword id="KW-1185">Reference proteome</keyword>
<gene>
    <name evidence="1" type="primary">aspS</name>
    <name type="ordered locus">SCO3795</name>
    <name type="ORF">SCAC2.03c</name>
</gene>
<organism>
    <name type="scientific">Streptomyces coelicolor (strain ATCC BAA-471 / A3(2) / M145)</name>
    <dbReference type="NCBI Taxonomy" id="100226"/>
    <lineage>
        <taxon>Bacteria</taxon>
        <taxon>Bacillati</taxon>
        <taxon>Actinomycetota</taxon>
        <taxon>Actinomycetes</taxon>
        <taxon>Kitasatosporales</taxon>
        <taxon>Streptomycetaceae</taxon>
        <taxon>Streptomyces</taxon>
        <taxon>Streptomyces albidoflavus group</taxon>
    </lineage>
</organism>